<sequence length="129" mass="14251">MQSPLTIPVPVPVLRLPRGPDGFSRGFASDGRRTILRPEVGEGHIQDPPESQEQRARATLRERYLRSLLAMVGHPVSFTLHEGVHVTAQFGATDLDVANFYVSQLQTPIGVQAEALLRCSDIISYSFKL</sequence>
<comment type="function">
    <text evidence="2">The SMN complex catalyzes the assembly of small nuclear ribonucleoproteins (snRNPs), the building blocks of the spliceosome, and thereby plays an important role in the splicing of cellular pre-mRNAs. Most spliceosomal snRNPs contain a common set of Sm proteins SNRPB, SNRPD1, SNRPD2, SNRPD3, SNRPE, SNRPF and SNRPG that assemble in a heptameric protein ring on the Sm site of the small nuclear RNA to form the core snRNP (Sm core). In the cytosol, the Sm proteins SNRPD1, SNRPD2, SNRPE, SNRPF and SNRPG are trapped in an inactive 6S pICln-Sm complex by the chaperone CLNS1A that controls the assembly of the core snRNP. To assemble core snRNPs, the SMN complex accepts the trapped 5Sm proteins from CLNS1A forming an intermediate. Binding of snRNA inside 5Sm triggers eviction of the SMN complex, thereby allowing binding of SNRPD3 and SNRPB to complete assembly of the core snRNP (By similarity).</text>
</comment>
<comment type="subunit">
    <text evidence="2">Part of the core SMN complex that contains SMN1, GEMIN2/SIP1, DDX20/GEMIN3, GEMIN4, GEMIN5, GEMIN6, GEMIN7, GEMIN8 and STRAP/UNRIP (By similarity). Part of the SMN-Sm complex that contains SMN1, GEMIN2/SIP1, DDX20/GEMIN3, GEMIN4, GEMIN5, GEMIN6, GEMIN7, GEMIN8, STRAP/UNRIP and the Sm proteins SNRPB, SNRPD1, SNRPD2, SNRPD3, SNRPE, SNRPF and SNRPG (By similarity). Interacts with GEMIN6; the interaction is direct (By similarity). Interacts with STRAP/UNRIP; the interaction is direct (By similarity). Interacts with GEMIN8; the interaction is direct (By similarity). Interacts with SNRPB, SNRPD2, SNRPD3 and SNRPE; the interaction is direct (By similarity).</text>
</comment>
<comment type="subcellular location">
    <subcellularLocation>
        <location evidence="2">Nucleus</location>
        <location evidence="2">Nucleoplasm</location>
    </subcellularLocation>
    <subcellularLocation>
        <location evidence="2">Nucleus</location>
        <location evidence="2">Gem</location>
    </subcellularLocation>
    <subcellularLocation>
        <location evidence="2">Cytoplasm</location>
    </subcellularLocation>
    <text evidence="1">Found both in the nucleoplasm and in nuclear bodies called gems (Gemini of Cajal bodies) that are often in proximity to Cajal (coiled) bodies. Also found in the cytoplasm (By similarity).</text>
</comment>
<comment type="similarity">
    <text evidence="5">Belongs to the gemin-7 family.</text>
</comment>
<evidence type="ECO:0000250" key="1"/>
<evidence type="ECO:0000250" key="2">
    <source>
        <dbReference type="UniProtKB" id="Q9H840"/>
    </source>
</evidence>
<evidence type="ECO:0000255" key="3">
    <source>
        <dbReference type="PROSITE-ProRule" id="PRU01287"/>
    </source>
</evidence>
<evidence type="ECO:0000255" key="4">
    <source>
        <dbReference type="PROSITE-ProRule" id="PRU01346"/>
    </source>
</evidence>
<evidence type="ECO:0000305" key="5"/>
<dbReference type="EMBL" id="AK010303">
    <property type="protein sequence ID" value="BAB26836.1"/>
    <property type="molecule type" value="mRNA"/>
</dbReference>
<dbReference type="EMBL" id="BC028527">
    <property type="protein sequence ID" value="AAH28527.1"/>
    <property type="molecule type" value="mRNA"/>
</dbReference>
<dbReference type="CCDS" id="CCDS20907.1"/>
<dbReference type="RefSeq" id="NP_081465.1">
    <property type="nucleotide sequence ID" value="NM_027189.2"/>
</dbReference>
<dbReference type="SMR" id="Q9CWY4"/>
<dbReference type="BioGRID" id="213643">
    <property type="interactions" value="1"/>
</dbReference>
<dbReference type="FunCoup" id="Q9CWY4">
    <property type="interactions" value="757"/>
</dbReference>
<dbReference type="IntAct" id="Q9CWY4">
    <property type="interactions" value="1"/>
</dbReference>
<dbReference type="MINT" id="Q9CWY4"/>
<dbReference type="STRING" id="10090.ENSMUSP00000113266"/>
<dbReference type="iPTMnet" id="Q9CWY4"/>
<dbReference type="PhosphoSitePlus" id="Q9CWY4"/>
<dbReference type="PaxDb" id="10090-ENSMUSP00000113266"/>
<dbReference type="ProteomicsDB" id="272954"/>
<dbReference type="Pumba" id="Q9CWY4"/>
<dbReference type="Antibodypedia" id="31264">
    <property type="antibodies" value="155 antibodies from 22 providers"/>
</dbReference>
<dbReference type="DNASU" id="69731"/>
<dbReference type="Ensembl" id="ENSMUST00000051364.4">
    <property type="protein sequence ID" value="ENSMUSP00000055844.4"/>
    <property type="gene ID" value="ENSMUSG00000044709.7"/>
</dbReference>
<dbReference type="Ensembl" id="ENSMUST00000117222.2">
    <property type="protein sequence ID" value="ENSMUSP00000113266.2"/>
    <property type="gene ID" value="ENSMUSG00000044709.7"/>
</dbReference>
<dbReference type="Ensembl" id="ENSMUST00000119912.2">
    <property type="protein sequence ID" value="ENSMUSP00000112742.2"/>
    <property type="gene ID" value="ENSMUSG00000044709.7"/>
</dbReference>
<dbReference type="Ensembl" id="ENSMUST00000122055.2">
    <property type="protein sequence ID" value="ENSMUSP00000113583.2"/>
    <property type="gene ID" value="ENSMUSG00000044709.7"/>
</dbReference>
<dbReference type="Ensembl" id="ENSMUST00000122127.2">
    <property type="protein sequence ID" value="ENSMUSP00000113709.2"/>
    <property type="gene ID" value="ENSMUSG00000044709.7"/>
</dbReference>
<dbReference type="GeneID" id="69731"/>
<dbReference type="KEGG" id="mmu:69731"/>
<dbReference type="UCSC" id="uc009fmi.1">
    <property type="organism name" value="mouse"/>
</dbReference>
<dbReference type="AGR" id="MGI:1916981"/>
<dbReference type="CTD" id="79760"/>
<dbReference type="MGI" id="MGI:1916981">
    <property type="gene designation" value="Gemin7"/>
</dbReference>
<dbReference type="VEuPathDB" id="HostDB:ENSMUSG00000044709"/>
<dbReference type="eggNOG" id="ENOG502S59N">
    <property type="taxonomic scope" value="Eukaryota"/>
</dbReference>
<dbReference type="GeneTree" id="ENSGT00390000018039"/>
<dbReference type="HOGENOM" id="CLU_2031900_0_0_1"/>
<dbReference type="InParanoid" id="Q9CWY4"/>
<dbReference type="OMA" id="CADIISY"/>
<dbReference type="OrthoDB" id="70763at2759"/>
<dbReference type="PhylomeDB" id="Q9CWY4"/>
<dbReference type="TreeFam" id="TF328578"/>
<dbReference type="Reactome" id="R-MMU-191859">
    <property type="pathway name" value="snRNP Assembly"/>
</dbReference>
<dbReference type="BioGRID-ORCS" id="69731">
    <property type="hits" value="19 hits in 78 CRISPR screens"/>
</dbReference>
<dbReference type="ChiTaRS" id="Gemin7">
    <property type="organism name" value="mouse"/>
</dbReference>
<dbReference type="PRO" id="PR:Q9CWY4"/>
<dbReference type="Proteomes" id="UP000000589">
    <property type="component" value="Chromosome 7"/>
</dbReference>
<dbReference type="RNAct" id="Q9CWY4">
    <property type="molecule type" value="protein"/>
</dbReference>
<dbReference type="Bgee" id="ENSMUSG00000044709">
    <property type="expression patterns" value="Expressed in interventricular septum and 245 other cell types or tissues"/>
</dbReference>
<dbReference type="ExpressionAtlas" id="Q9CWY4">
    <property type="expression patterns" value="baseline and differential"/>
</dbReference>
<dbReference type="GO" id="GO:0005737">
    <property type="term" value="C:cytoplasm"/>
    <property type="evidence" value="ECO:0000250"/>
    <property type="project" value="UniProtKB"/>
</dbReference>
<dbReference type="GO" id="GO:0005829">
    <property type="term" value="C:cytosol"/>
    <property type="evidence" value="ECO:0000250"/>
    <property type="project" value="UniProtKB"/>
</dbReference>
<dbReference type="GO" id="GO:0097504">
    <property type="term" value="C:Gemini of Cajal bodies"/>
    <property type="evidence" value="ECO:0000250"/>
    <property type="project" value="UniProtKB"/>
</dbReference>
<dbReference type="GO" id="GO:0016604">
    <property type="term" value="C:nuclear body"/>
    <property type="evidence" value="ECO:0000250"/>
    <property type="project" value="UniProtKB"/>
</dbReference>
<dbReference type="GO" id="GO:0005654">
    <property type="term" value="C:nucleoplasm"/>
    <property type="evidence" value="ECO:0000250"/>
    <property type="project" value="UniProtKB"/>
</dbReference>
<dbReference type="GO" id="GO:0032797">
    <property type="term" value="C:SMN complex"/>
    <property type="evidence" value="ECO:0000250"/>
    <property type="project" value="UniProtKB"/>
</dbReference>
<dbReference type="GO" id="GO:0034719">
    <property type="term" value="C:SMN-Sm protein complex"/>
    <property type="evidence" value="ECO:0000250"/>
    <property type="project" value="UniProtKB"/>
</dbReference>
<dbReference type="GO" id="GO:0003723">
    <property type="term" value="F:RNA binding"/>
    <property type="evidence" value="ECO:0007669"/>
    <property type="project" value="InterPro"/>
</dbReference>
<dbReference type="GO" id="GO:0000387">
    <property type="term" value="P:spliceosomal snRNP assembly"/>
    <property type="evidence" value="ECO:0000250"/>
    <property type="project" value="UniProtKB"/>
</dbReference>
<dbReference type="CDD" id="cd11677">
    <property type="entry name" value="Gemin7"/>
    <property type="match status" value="1"/>
</dbReference>
<dbReference type="FunFam" id="2.30.30.100:FF:000040">
    <property type="entry name" value="Gem-associated protein 7"/>
    <property type="match status" value="1"/>
</dbReference>
<dbReference type="Gene3D" id="2.30.30.100">
    <property type="match status" value="1"/>
</dbReference>
<dbReference type="InterPro" id="IPR047575">
    <property type="entry name" value="Sm"/>
</dbReference>
<dbReference type="InterPro" id="IPR020338">
    <property type="entry name" value="SMN_gemin7"/>
</dbReference>
<dbReference type="InterPro" id="IPR024642">
    <property type="entry name" value="SUZ-C"/>
</dbReference>
<dbReference type="PANTHER" id="PTHR14679">
    <property type="entry name" value="GEM-ASSOCIATED PROTEIN 7"/>
    <property type="match status" value="1"/>
</dbReference>
<dbReference type="PANTHER" id="PTHR14679:SF1">
    <property type="entry name" value="GEM-ASSOCIATED PROTEIN 7"/>
    <property type="match status" value="1"/>
</dbReference>
<dbReference type="Pfam" id="PF11095">
    <property type="entry name" value="Gemin7"/>
    <property type="match status" value="1"/>
</dbReference>
<dbReference type="PROSITE" id="PS52002">
    <property type="entry name" value="SM"/>
    <property type="match status" value="1"/>
</dbReference>
<dbReference type="PROSITE" id="PS51938">
    <property type="entry name" value="SUZ_C"/>
    <property type="match status" value="1"/>
</dbReference>
<organism>
    <name type="scientific">Mus musculus</name>
    <name type="common">Mouse</name>
    <dbReference type="NCBI Taxonomy" id="10090"/>
    <lineage>
        <taxon>Eukaryota</taxon>
        <taxon>Metazoa</taxon>
        <taxon>Chordata</taxon>
        <taxon>Craniata</taxon>
        <taxon>Vertebrata</taxon>
        <taxon>Euteleostomi</taxon>
        <taxon>Mammalia</taxon>
        <taxon>Eutheria</taxon>
        <taxon>Euarchontoglires</taxon>
        <taxon>Glires</taxon>
        <taxon>Rodentia</taxon>
        <taxon>Myomorpha</taxon>
        <taxon>Muroidea</taxon>
        <taxon>Muridae</taxon>
        <taxon>Murinae</taxon>
        <taxon>Mus</taxon>
        <taxon>Mus</taxon>
    </lineage>
</organism>
<feature type="chain" id="PRO_0000087463" description="Gem-associated protein 7">
    <location>
        <begin position="1"/>
        <end position="129"/>
    </location>
</feature>
<feature type="domain" description="SUZ-C" evidence="3">
    <location>
        <begin position="1"/>
        <end position="31"/>
    </location>
</feature>
<feature type="domain" description="Sm" evidence="4">
    <location>
        <begin position="63"/>
        <end position="129"/>
    </location>
</feature>
<feature type="modified residue" description="N-acetylmethionine" evidence="2">
    <location>
        <position position="1"/>
    </location>
</feature>
<accession>Q9CWY4</accession>
<keyword id="KW-0007">Acetylation</keyword>
<keyword id="KW-0963">Cytoplasm</keyword>
<keyword id="KW-0507">mRNA processing</keyword>
<keyword id="KW-0508">mRNA splicing</keyword>
<keyword id="KW-0539">Nucleus</keyword>
<keyword id="KW-1185">Reference proteome</keyword>
<gene>
    <name type="primary">Gemin7</name>
</gene>
<reference key="1">
    <citation type="journal article" date="2005" name="Science">
        <title>The transcriptional landscape of the mammalian genome.</title>
        <authorList>
            <person name="Carninci P."/>
            <person name="Kasukawa T."/>
            <person name="Katayama S."/>
            <person name="Gough J."/>
            <person name="Frith M.C."/>
            <person name="Maeda N."/>
            <person name="Oyama R."/>
            <person name="Ravasi T."/>
            <person name="Lenhard B."/>
            <person name="Wells C."/>
            <person name="Kodzius R."/>
            <person name="Shimokawa K."/>
            <person name="Bajic V.B."/>
            <person name="Brenner S.E."/>
            <person name="Batalov S."/>
            <person name="Forrest A.R."/>
            <person name="Zavolan M."/>
            <person name="Davis M.J."/>
            <person name="Wilming L.G."/>
            <person name="Aidinis V."/>
            <person name="Allen J.E."/>
            <person name="Ambesi-Impiombato A."/>
            <person name="Apweiler R."/>
            <person name="Aturaliya R.N."/>
            <person name="Bailey T.L."/>
            <person name="Bansal M."/>
            <person name="Baxter L."/>
            <person name="Beisel K.W."/>
            <person name="Bersano T."/>
            <person name="Bono H."/>
            <person name="Chalk A.M."/>
            <person name="Chiu K.P."/>
            <person name="Choudhary V."/>
            <person name="Christoffels A."/>
            <person name="Clutterbuck D.R."/>
            <person name="Crowe M.L."/>
            <person name="Dalla E."/>
            <person name="Dalrymple B.P."/>
            <person name="de Bono B."/>
            <person name="Della Gatta G."/>
            <person name="di Bernardo D."/>
            <person name="Down T."/>
            <person name="Engstrom P."/>
            <person name="Fagiolini M."/>
            <person name="Faulkner G."/>
            <person name="Fletcher C.F."/>
            <person name="Fukushima T."/>
            <person name="Furuno M."/>
            <person name="Futaki S."/>
            <person name="Gariboldi M."/>
            <person name="Georgii-Hemming P."/>
            <person name="Gingeras T.R."/>
            <person name="Gojobori T."/>
            <person name="Green R.E."/>
            <person name="Gustincich S."/>
            <person name="Harbers M."/>
            <person name="Hayashi Y."/>
            <person name="Hensch T.K."/>
            <person name="Hirokawa N."/>
            <person name="Hill D."/>
            <person name="Huminiecki L."/>
            <person name="Iacono M."/>
            <person name="Ikeo K."/>
            <person name="Iwama A."/>
            <person name="Ishikawa T."/>
            <person name="Jakt M."/>
            <person name="Kanapin A."/>
            <person name="Katoh M."/>
            <person name="Kawasawa Y."/>
            <person name="Kelso J."/>
            <person name="Kitamura H."/>
            <person name="Kitano H."/>
            <person name="Kollias G."/>
            <person name="Krishnan S.P."/>
            <person name="Kruger A."/>
            <person name="Kummerfeld S.K."/>
            <person name="Kurochkin I.V."/>
            <person name="Lareau L.F."/>
            <person name="Lazarevic D."/>
            <person name="Lipovich L."/>
            <person name="Liu J."/>
            <person name="Liuni S."/>
            <person name="McWilliam S."/>
            <person name="Madan Babu M."/>
            <person name="Madera M."/>
            <person name="Marchionni L."/>
            <person name="Matsuda H."/>
            <person name="Matsuzawa S."/>
            <person name="Miki H."/>
            <person name="Mignone F."/>
            <person name="Miyake S."/>
            <person name="Morris K."/>
            <person name="Mottagui-Tabar S."/>
            <person name="Mulder N."/>
            <person name="Nakano N."/>
            <person name="Nakauchi H."/>
            <person name="Ng P."/>
            <person name="Nilsson R."/>
            <person name="Nishiguchi S."/>
            <person name="Nishikawa S."/>
            <person name="Nori F."/>
            <person name="Ohara O."/>
            <person name="Okazaki Y."/>
            <person name="Orlando V."/>
            <person name="Pang K.C."/>
            <person name="Pavan W.J."/>
            <person name="Pavesi G."/>
            <person name="Pesole G."/>
            <person name="Petrovsky N."/>
            <person name="Piazza S."/>
            <person name="Reed J."/>
            <person name="Reid J.F."/>
            <person name="Ring B.Z."/>
            <person name="Ringwald M."/>
            <person name="Rost B."/>
            <person name="Ruan Y."/>
            <person name="Salzberg S.L."/>
            <person name="Sandelin A."/>
            <person name="Schneider C."/>
            <person name="Schoenbach C."/>
            <person name="Sekiguchi K."/>
            <person name="Semple C.A."/>
            <person name="Seno S."/>
            <person name="Sessa L."/>
            <person name="Sheng Y."/>
            <person name="Shibata Y."/>
            <person name="Shimada H."/>
            <person name="Shimada K."/>
            <person name="Silva D."/>
            <person name="Sinclair B."/>
            <person name="Sperling S."/>
            <person name="Stupka E."/>
            <person name="Sugiura K."/>
            <person name="Sultana R."/>
            <person name="Takenaka Y."/>
            <person name="Taki K."/>
            <person name="Tammoja K."/>
            <person name="Tan S.L."/>
            <person name="Tang S."/>
            <person name="Taylor M.S."/>
            <person name="Tegner J."/>
            <person name="Teichmann S.A."/>
            <person name="Ueda H.R."/>
            <person name="van Nimwegen E."/>
            <person name="Verardo R."/>
            <person name="Wei C.L."/>
            <person name="Yagi K."/>
            <person name="Yamanishi H."/>
            <person name="Zabarovsky E."/>
            <person name="Zhu S."/>
            <person name="Zimmer A."/>
            <person name="Hide W."/>
            <person name="Bult C."/>
            <person name="Grimmond S.M."/>
            <person name="Teasdale R.D."/>
            <person name="Liu E.T."/>
            <person name="Brusic V."/>
            <person name="Quackenbush J."/>
            <person name="Wahlestedt C."/>
            <person name="Mattick J.S."/>
            <person name="Hume D.A."/>
            <person name="Kai C."/>
            <person name="Sasaki D."/>
            <person name="Tomaru Y."/>
            <person name="Fukuda S."/>
            <person name="Kanamori-Katayama M."/>
            <person name="Suzuki M."/>
            <person name="Aoki J."/>
            <person name="Arakawa T."/>
            <person name="Iida J."/>
            <person name="Imamura K."/>
            <person name="Itoh M."/>
            <person name="Kato T."/>
            <person name="Kawaji H."/>
            <person name="Kawagashira N."/>
            <person name="Kawashima T."/>
            <person name="Kojima M."/>
            <person name="Kondo S."/>
            <person name="Konno H."/>
            <person name="Nakano K."/>
            <person name="Ninomiya N."/>
            <person name="Nishio T."/>
            <person name="Okada M."/>
            <person name="Plessy C."/>
            <person name="Shibata K."/>
            <person name="Shiraki T."/>
            <person name="Suzuki S."/>
            <person name="Tagami M."/>
            <person name="Waki K."/>
            <person name="Watahiki A."/>
            <person name="Okamura-Oho Y."/>
            <person name="Suzuki H."/>
            <person name="Kawai J."/>
            <person name="Hayashizaki Y."/>
        </authorList>
    </citation>
    <scope>NUCLEOTIDE SEQUENCE [LARGE SCALE MRNA]</scope>
    <source>
        <strain>C57BL/6J</strain>
        <tissue>Embryonic stem cell</tissue>
    </source>
</reference>
<reference key="2">
    <citation type="journal article" date="2004" name="Genome Res.">
        <title>The status, quality, and expansion of the NIH full-length cDNA project: the Mammalian Gene Collection (MGC).</title>
        <authorList>
            <consortium name="The MGC Project Team"/>
        </authorList>
    </citation>
    <scope>NUCLEOTIDE SEQUENCE [LARGE SCALE MRNA]</scope>
    <source>
        <tissue>Thymus</tissue>
    </source>
</reference>
<proteinExistence type="evidence at transcript level"/>
<name>GEMI7_MOUSE</name>
<protein>
    <recommendedName>
        <fullName>Gem-associated protein 7</fullName>
        <shortName>Gemin-7</shortName>
    </recommendedName>
</protein>